<accession>Q3M6L5</accession>
<sequence>MAKIISFDEESRRALERGVNALADAVKITLGPKGRNVLLEKKYGTPQIVNDGITVAKEIELEDPLENTGARLIQEVAAKTKDVAGDGTTTATVLVQALIKEGLKNVAAGSNPVSLKRGIDKTTEALVAEIAKVAKPVEGSAIAQVATVSAGNDEEVGAMIAQAVEKVTKDGVITVEESKSLTTELDVVEGMQIDRGYISPYFITNNERQTVELENVRILITDKKISSIQELVPVLEKVARLGQPLLIIAEDVEGDALATLVVNKARGVLSVAAIKAPGFGERRKALLQDIAILTDGQLISEEIGLSLDTASLEALGTAQKITIEKDNTTIVAGNTTKPEIQKRIAQIRRQLEETDSEYDSEKLQERIAKLAGGIAVIKVGAATETELKDRKLRIEDALNATKAAVAEGIVPGGGKTLIYLASKVDEIKKNFDEEEKIGADIVKRALEAPLRQIADNAGVEGSVIVSRVKDSDFNTGYNAATGEFEDLIAAGIIDPAKVVRSALQNAASIAGLVLTTEAIVVEKPEKKAAAPADAGMGGMGGMGGMGGMGGMGGMGGMGMF</sequence>
<protein>
    <recommendedName>
        <fullName evidence="1">Chaperonin GroEL 2</fullName>
        <ecNumber evidence="1">5.6.1.7</ecNumber>
    </recommendedName>
    <alternativeName>
        <fullName evidence="1">60 kDa chaperonin 2</fullName>
    </alternativeName>
    <alternativeName>
        <fullName evidence="1">Chaperonin-60 2</fullName>
        <shortName evidence="1">Cpn60 2</shortName>
    </alternativeName>
</protein>
<comment type="function">
    <text evidence="1">Together with its co-chaperonin GroES, plays an essential role in assisting protein folding. The GroEL-GroES system forms a nano-cage that allows encapsulation of the non-native substrate proteins and provides a physical environment optimized to promote and accelerate protein folding.</text>
</comment>
<comment type="catalytic activity">
    <reaction evidence="1">
        <text>ATP + H2O + a folded polypeptide = ADP + phosphate + an unfolded polypeptide.</text>
        <dbReference type="EC" id="5.6.1.7"/>
    </reaction>
</comment>
<comment type="subunit">
    <text evidence="1">Forms a cylinder of 14 subunits composed of two heptameric rings stacked back-to-back. Interacts with the co-chaperonin GroES.</text>
</comment>
<comment type="subcellular location">
    <subcellularLocation>
        <location evidence="1">Cytoplasm</location>
    </subcellularLocation>
</comment>
<comment type="similarity">
    <text evidence="1">Belongs to the chaperonin (HSP60) family.</text>
</comment>
<comment type="sequence caution" evidence="2">
    <conflict type="erroneous initiation">
        <sequence resource="EMBL-CDS" id="ABA23371"/>
    </conflict>
</comment>
<gene>
    <name evidence="1" type="primary">groEL2</name>
    <name evidence="1" type="synonym">groL2</name>
    <name type="ordered locus">Ava_3766</name>
</gene>
<name>CH602_TRIV2</name>
<organism>
    <name type="scientific">Trichormus variabilis (strain ATCC 29413 / PCC 7937)</name>
    <name type="common">Anabaena variabilis</name>
    <dbReference type="NCBI Taxonomy" id="240292"/>
    <lineage>
        <taxon>Bacteria</taxon>
        <taxon>Bacillati</taxon>
        <taxon>Cyanobacteriota</taxon>
        <taxon>Cyanophyceae</taxon>
        <taxon>Nostocales</taxon>
        <taxon>Nostocaceae</taxon>
        <taxon>Trichormus</taxon>
    </lineage>
</organism>
<proteinExistence type="inferred from homology"/>
<evidence type="ECO:0000255" key="1">
    <source>
        <dbReference type="HAMAP-Rule" id="MF_00600"/>
    </source>
</evidence>
<evidence type="ECO:0000305" key="2"/>
<reference key="1">
    <citation type="journal article" date="2014" name="Stand. Genomic Sci.">
        <title>Complete genome sequence of Anabaena variabilis ATCC 29413.</title>
        <authorList>
            <person name="Thiel T."/>
            <person name="Pratte B.S."/>
            <person name="Zhong J."/>
            <person name="Goodwin L."/>
            <person name="Copeland A."/>
            <person name="Lucas S."/>
            <person name="Han C."/>
            <person name="Pitluck S."/>
            <person name="Land M.L."/>
            <person name="Kyrpides N.C."/>
            <person name="Woyke T."/>
        </authorList>
    </citation>
    <scope>NUCLEOTIDE SEQUENCE [LARGE SCALE GENOMIC DNA]</scope>
    <source>
        <strain>ATCC 29413 / PCC 7937</strain>
    </source>
</reference>
<dbReference type="EC" id="5.6.1.7" evidence="1"/>
<dbReference type="EMBL" id="CP000117">
    <property type="protein sequence ID" value="ABA23371.1"/>
    <property type="status" value="ALT_INIT"/>
    <property type="molecule type" value="Genomic_DNA"/>
</dbReference>
<dbReference type="SMR" id="Q3M6L5"/>
<dbReference type="STRING" id="240292.Ava_3766"/>
<dbReference type="KEGG" id="ava:Ava_3766"/>
<dbReference type="eggNOG" id="COG0459">
    <property type="taxonomic scope" value="Bacteria"/>
</dbReference>
<dbReference type="HOGENOM" id="CLU_016503_3_0_3"/>
<dbReference type="Proteomes" id="UP000002533">
    <property type="component" value="Chromosome"/>
</dbReference>
<dbReference type="GO" id="GO:0005737">
    <property type="term" value="C:cytoplasm"/>
    <property type="evidence" value="ECO:0007669"/>
    <property type="project" value="UniProtKB-SubCell"/>
</dbReference>
<dbReference type="GO" id="GO:0005524">
    <property type="term" value="F:ATP binding"/>
    <property type="evidence" value="ECO:0007669"/>
    <property type="project" value="UniProtKB-UniRule"/>
</dbReference>
<dbReference type="GO" id="GO:0140662">
    <property type="term" value="F:ATP-dependent protein folding chaperone"/>
    <property type="evidence" value="ECO:0007669"/>
    <property type="project" value="InterPro"/>
</dbReference>
<dbReference type="GO" id="GO:0016853">
    <property type="term" value="F:isomerase activity"/>
    <property type="evidence" value="ECO:0007669"/>
    <property type="project" value="UniProtKB-KW"/>
</dbReference>
<dbReference type="GO" id="GO:0051082">
    <property type="term" value="F:unfolded protein binding"/>
    <property type="evidence" value="ECO:0007669"/>
    <property type="project" value="UniProtKB-UniRule"/>
</dbReference>
<dbReference type="GO" id="GO:0042026">
    <property type="term" value="P:protein refolding"/>
    <property type="evidence" value="ECO:0007669"/>
    <property type="project" value="UniProtKB-UniRule"/>
</dbReference>
<dbReference type="CDD" id="cd03344">
    <property type="entry name" value="GroEL"/>
    <property type="match status" value="1"/>
</dbReference>
<dbReference type="FunFam" id="3.50.7.10:FF:000001">
    <property type="entry name" value="60 kDa chaperonin"/>
    <property type="match status" value="1"/>
</dbReference>
<dbReference type="Gene3D" id="3.50.7.10">
    <property type="entry name" value="GroEL"/>
    <property type="match status" value="1"/>
</dbReference>
<dbReference type="Gene3D" id="1.10.560.10">
    <property type="entry name" value="GroEL-like equatorial domain"/>
    <property type="match status" value="1"/>
</dbReference>
<dbReference type="Gene3D" id="3.30.260.10">
    <property type="entry name" value="TCP-1-like chaperonin intermediate domain"/>
    <property type="match status" value="1"/>
</dbReference>
<dbReference type="HAMAP" id="MF_00600">
    <property type="entry name" value="CH60"/>
    <property type="match status" value="1"/>
</dbReference>
<dbReference type="InterPro" id="IPR001844">
    <property type="entry name" value="Cpn60/GroEL"/>
</dbReference>
<dbReference type="InterPro" id="IPR002423">
    <property type="entry name" value="Cpn60/GroEL/TCP-1"/>
</dbReference>
<dbReference type="InterPro" id="IPR027409">
    <property type="entry name" value="GroEL-like_apical_dom_sf"/>
</dbReference>
<dbReference type="InterPro" id="IPR027413">
    <property type="entry name" value="GROEL-like_equatorial_sf"/>
</dbReference>
<dbReference type="InterPro" id="IPR027410">
    <property type="entry name" value="TCP-1-like_intermed_sf"/>
</dbReference>
<dbReference type="NCBIfam" id="TIGR02348">
    <property type="entry name" value="GroEL"/>
    <property type="match status" value="1"/>
</dbReference>
<dbReference type="NCBIfam" id="NF000592">
    <property type="entry name" value="PRK00013.1"/>
    <property type="match status" value="1"/>
</dbReference>
<dbReference type="NCBIfam" id="NF009487">
    <property type="entry name" value="PRK12849.1"/>
    <property type="match status" value="1"/>
</dbReference>
<dbReference type="NCBIfam" id="NF009488">
    <property type="entry name" value="PRK12850.1"/>
    <property type="match status" value="1"/>
</dbReference>
<dbReference type="NCBIfam" id="NF009489">
    <property type="entry name" value="PRK12851.1"/>
    <property type="match status" value="1"/>
</dbReference>
<dbReference type="PANTHER" id="PTHR45633">
    <property type="entry name" value="60 KDA HEAT SHOCK PROTEIN, MITOCHONDRIAL"/>
    <property type="match status" value="1"/>
</dbReference>
<dbReference type="Pfam" id="PF00118">
    <property type="entry name" value="Cpn60_TCP1"/>
    <property type="match status" value="1"/>
</dbReference>
<dbReference type="PRINTS" id="PR00298">
    <property type="entry name" value="CHAPERONIN60"/>
</dbReference>
<dbReference type="SUPFAM" id="SSF52029">
    <property type="entry name" value="GroEL apical domain-like"/>
    <property type="match status" value="1"/>
</dbReference>
<dbReference type="SUPFAM" id="SSF48592">
    <property type="entry name" value="GroEL equatorial domain-like"/>
    <property type="match status" value="1"/>
</dbReference>
<dbReference type="SUPFAM" id="SSF54849">
    <property type="entry name" value="GroEL-intermediate domain like"/>
    <property type="match status" value="1"/>
</dbReference>
<keyword id="KW-0067">ATP-binding</keyword>
<keyword id="KW-0143">Chaperone</keyword>
<keyword id="KW-0963">Cytoplasm</keyword>
<keyword id="KW-0413">Isomerase</keyword>
<keyword id="KW-0547">Nucleotide-binding</keyword>
<feature type="chain" id="PRO_0000256869" description="Chaperonin GroEL 2">
    <location>
        <begin position="1"/>
        <end position="560"/>
    </location>
</feature>
<feature type="binding site" evidence="1">
    <location>
        <begin position="29"/>
        <end position="32"/>
    </location>
    <ligand>
        <name>ATP</name>
        <dbReference type="ChEBI" id="CHEBI:30616"/>
    </ligand>
</feature>
<feature type="binding site" evidence="1">
    <location>
        <begin position="86"/>
        <end position="90"/>
    </location>
    <ligand>
        <name>ATP</name>
        <dbReference type="ChEBI" id="CHEBI:30616"/>
    </ligand>
</feature>
<feature type="binding site" evidence="1">
    <location>
        <position position="413"/>
    </location>
    <ligand>
        <name>ATP</name>
        <dbReference type="ChEBI" id="CHEBI:30616"/>
    </ligand>
</feature>
<feature type="binding site" evidence="1">
    <location>
        <begin position="478"/>
        <end position="480"/>
    </location>
    <ligand>
        <name>ATP</name>
        <dbReference type="ChEBI" id="CHEBI:30616"/>
    </ligand>
</feature>
<feature type="binding site" evidence="1">
    <location>
        <position position="494"/>
    </location>
    <ligand>
        <name>ATP</name>
        <dbReference type="ChEBI" id="CHEBI:30616"/>
    </ligand>
</feature>